<accession>Q6Z4G8</accession>
<accession>A3BLZ1</accession>
<accession>Q0D4U0</accession>
<gene>
    <name type="primary">BC1L6</name>
    <name type="ordered locus">Os07g0604300</name>
    <name type="ordered locus">LOC_Os07g41310</name>
    <name evidence="4" type="ORF">OsJ_25037</name>
    <name type="ORF">OSJNBb0040H10.12</name>
</gene>
<name>COBL1_ORYSJ</name>
<evidence type="ECO:0000250" key="1"/>
<evidence type="ECO:0000255" key="2"/>
<evidence type="ECO:0000305" key="3"/>
<evidence type="ECO:0000312" key="4">
    <source>
        <dbReference type="EMBL" id="EAZ40580.1"/>
    </source>
</evidence>
<comment type="function">
    <text evidence="1">Involved in determining the orientation of cell expansion, probably by playing an important role in cellulose deposition. May act by recruiting cellulose synthesizing complexes to discrete positions on the cell surface (By similarity).</text>
</comment>
<comment type="subcellular location">
    <subcellularLocation>
        <location evidence="3">Cell membrane</location>
        <topology evidence="3">Lipid-anchor</topology>
        <topology evidence="3">GPI-anchor</topology>
    </subcellularLocation>
</comment>
<comment type="similarity">
    <text evidence="3">Belongs to the COBRA family.</text>
</comment>
<feature type="signal peptide" evidence="2">
    <location>
        <begin position="1"/>
        <end position="28"/>
    </location>
</feature>
<feature type="chain" id="PRO_0000247629" description="COBRA-like protein 1">
    <location>
        <begin position="29"/>
        <end position="420"/>
    </location>
</feature>
<feature type="propeptide" id="PRO_0000247630" description="Removed in mature form" evidence="2">
    <location>
        <begin position="421"/>
        <end position="446"/>
    </location>
</feature>
<feature type="lipid moiety-binding region" description="GPI-anchor amidated alanine" evidence="2">
    <location>
        <position position="420"/>
    </location>
</feature>
<feature type="glycosylation site" description="N-linked (GlcNAc...) asparagine" evidence="2">
    <location>
        <position position="37"/>
    </location>
</feature>
<feature type="glycosylation site" description="N-linked (GlcNAc...) asparagine" evidence="2">
    <location>
        <position position="162"/>
    </location>
</feature>
<feature type="glycosylation site" description="N-linked (GlcNAc...) asparagine" evidence="2">
    <location>
        <position position="170"/>
    </location>
</feature>
<feature type="glycosylation site" description="N-linked (GlcNAc...) asparagine" evidence="2">
    <location>
        <position position="209"/>
    </location>
</feature>
<feature type="glycosylation site" description="N-linked (GlcNAc...) asparagine" evidence="2">
    <location>
        <position position="234"/>
    </location>
</feature>
<feature type="glycosylation site" description="N-linked (GlcNAc...) asparagine" evidence="2">
    <location>
        <position position="316"/>
    </location>
</feature>
<feature type="glycosylation site" description="N-linked (GlcNAc...) asparagine" evidence="2">
    <location>
        <position position="331"/>
    </location>
</feature>
<feature type="glycosylation site" description="N-linked (GlcNAc...) asparagine" evidence="2">
    <location>
        <position position="350"/>
    </location>
</feature>
<feature type="glycosylation site" description="N-linked (GlcNAc...) asparagine" evidence="2">
    <location>
        <position position="419"/>
    </location>
</feature>
<protein>
    <recommendedName>
        <fullName>COBRA-like protein 1</fullName>
    </recommendedName>
    <alternativeName>
        <fullName>Protein BRITTLE CULM1-like 6</fullName>
    </alternativeName>
</protein>
<sequence>MALLLLRMGVSVALLVAFFSSLIPSSEAYDPLDPNGNITIKWDVLQWTPDGYVAVVSLYNYQQYRHIQSPGWKLGWVWAKKEIIWAMNGGQATEQGDCSKFKSNIPHCCKKDPEIVDLLPGTPYNMQIANCCKGGVLNSWAQDPANAIASFQVSVGQAGTTNKTVRVPRNFTLKSPGPGYTCGSAKVVRPTKFFSQDGRRTTQAHMTWNVTCTYSQIVAQRSPTCCVSLSSFYNDTIVNCPTCSCGCQNNKPGSCVEGNSPYLASVVNTHNKDSLTPLVQCTSHMCPIRVHWHVKVNYKEYWRVKITVTNFNYRMNYSQWNLVTQHPSFDNLTTIFSFNYKSLNPYGVINDTAMLWGIKYYNDLLMTAGPDGNVQSELLFKKDPKSFTFEKGWAFPRRVYFNGDNCVMPPPDAYPWLPNASTRVMSSILLPFITIWTALTFLMVYA</sequence>
<reference key="1">
    <citation type="journal article" date="2005" name="Nature">
        <title>The map-based sequence of the rice genome.</title>
        <authorList>
            <consortium name="International rice genome sequencing project (IRGSP)"/>
        </authorList>
    </citation>
    <scope>NUCLEOTIDE SEQUENCE [LARGE SCALE GENOMIC DNA]</scope>
    <source>
        <strain>cv. Nipponbare</strain>
    </source>
</reference>
<reference key="2">
    <citation type="journal article" date="2008" name="Nucleic Acids Res.">
        <title>The rice annotation project database (RAP-DB): 2008 update.</title>
        <authorList>
            <consortium name="The rice annotation project (RAP)"/>
        </authorList>
    </citation>
    <scope>GENOME REANNOTATION</scope>
    <source>
        <strain>cv. Nipponbare</strain>
    </source>
</reference>
<reference key="3">
    <citation type="journal article" date="2013" name="Rice">
        <title>Improvement of the Oryza sativa Nipponbare reference genome using next generation sequence and optical map data.</title>
        <authorList>
            <person name="Kawahara Y."/>
            <person name="de la Bastide M."/>
            <person name="Hamilton J.P."/>
            <person name="Kanamori H."/>
            <person name="McCombie W.R."/>
            <person name="Ouyang S."/>
            <person name="Schwartz D.C."/>
            <person name="Tanaka T."/>
            <person name="Wu J."/>
            <person name="Zhou S."/>
            <person name="Childs K.L."/>
            <person name="Davidson R.M."/>
            <person name="Lin H."/>
            <person name="Quesada-Ocampo L."/>
            <person name="Vaillancourt B."/>
            <person name="Sakai H."/>
            <person name="Lee S.S."/>
            <person name="Kim J."/>
            <person name="Numa H."/>
            <person name="Itoh T."/>
            <person name="Buell C.R."/>
            <person name="Matsumoto T."/>
        </authorList>
    </citation>
    <scope>GENOME REANNOTATION</scope>
    <source>
        <strain>cv. Nipponbare</strain>
    </source>
</reference>
<reference key="4">
    <citation type="journal article" date="2005" name="PLoS Biol.">
        <title>The genomes of Oryza sativa: a history of duplications.</title>
        <authorList>
            <person name="Yu J."/>
            <person name="Wang J."/>
            <person name="Lin W."/>
            <person name="Li S."/>
            <person name="Li H."/>
            <person name="Zhou J."/>
            <person name="Ni P."/>
            <person name="Dong W."/>
            <person name="Hu S."/>
            <person name="Zeng C."/>
            <person name="Zhang J."/>
            <person name="Zhang Y."/>
            <person name="Li R."/>
            <person name="Xu Z."/>
            <person name="Li S."/>
            <person name="Li X."/>
            <person name="Zheng H."/>
            <person name="Cong L."/>
            <person name="Lin L."/>
            <person name="Yin J."/>
            <person name="Geng J."/>
            <person name="Li G."/>
            <person name="Shi J."/>
            <person name="Liu J."/>
            <person name="Lv H."/>
            <person name="Li J."/>
            <person name="Wang J."/>
            <person name="Deng Y."/>
            <person name="Ran L."/>
            <person name="Shi X."/>
            <person name="Wang X."/>
            <person name="Wu Q."/>
            <person name="Li C."/>
            <person name="Ren X."/>
            <person name="Wang J."/>
            <person name="Wang X."/>
            <person name="Li D."/>
            <person name="Liu D."/>
            <person name="Zhang X."/>
            <person name="Ji Z."/>
            <person name="Zhao W."/>
            <person name="Sun Y."/>
            <person name="Zhang Z."/>
            <person name="Bao J."/>
            <person name="Han Y."/>
            <person name="Dong L."/>
            <person name="Ji J."/>
            <person name="Chen P."/>
            <person name="Wu S."/>
            <person name="Liu J."/>
            <person name="Xiao Y."/>
            <person name="Bu D."/>
            <person name="Tan J."/>
            <person name="Yang L."/>
            <person name="Ye C."/>
            <person name="Zhang J."/>
            <person name="Xu J."/>
            <person name="Zhou Y."/>
            <person name="Yu Y."/>
            <person name="Zhang B."/>
            <person name="Zhuang S."/>
            <person name="Wei H."/>
            <person name="Liu B."/>
            <person name="Lei M."/>
            <person name="Yu H."/>
            <person name="Li Y."/>
            <person name="Xu H."/>
            <person name="Wei S."/>
            <person name="He X."/>
            <person name="Fang L."/>
            <person name="Zhang Z."/>
            <person name="Zhang Y."/>
            <person name="Huang X."/>
            <person name="Su Z."/>
            <person name="Tong W."/>
            <person name="Li J."/>
            <person name="Tong Z."/>
            <person name="Li S."/>
            <person name="Ye J."/>
            <person name="Wang L."/>
            <person name="Fang L."/>
            <person name="Lei T."/>
            <person name="Chen C.-S."/>
            <person name="Chen H.-C."/>
            <person name="Xu Z."/>
            <person name="Li H."/>
            <person name="Huang H."/>
            <person name="Zhang F."/>
            <person name="Xu H."/>
            <person name="Li N."/>
            <person name="Zhao C."/>
            <person name="Li S."/>
            <person name="Dong L."/>
            <person name="Huang Y."/>
            <person name="Li L."/>
            <person name="Xi Y."/>
            <person name="Qi Q."/>
            <person name="Li W."/>
            <person name="Zhang B."/>
            <person name="Hu W."/>
            <person name="Zhang Y."/>
            <person name="Tian X."/>
            <person name="Jiao Y."/>
            <person name="Liang X."/>
            <person name="Jin J."/>
            <person name="Gao L."/>
            <person name="Zheng W."/>
            <person name="Hao B."/>
            <person name="Liu S.-M."/>
            <person name="Wang W."/>
            <person name="Yuan L."/>
            <person name="Cao M."/>
            <person name="McDermott J."/>
            <person name="Samudrala R."/>
            <person name="Wang J."/>
            <person name="Wong G.K.-S."/>
            <person name="Yang H."/>
        </authorList>
    </citation>
    <scope>NUCLEOTIDE SEQUENCE [LARGE SCALE GENOMIC DNA]</scope>
    <source>
        <strain>cv. Nipponbare</strain>
    </source>
</reference>
<reference key="5">
    <citation type="journal article" date="2003" name="Science">
        <title>Collection, mapping, and annotation of over 28,000 cDNA clones from japonica rice.</title>
        <authorList>
            <consortium name="The rice full-length cDNA consortium"/>
        </authorList>
    </citation>
    <scope>NUCLEOTIDE SEQUENCE [LARGE SCALE MRNA]</scope>
    <source>
        <strain>cv. Nipponbare</strain>
    </source>
</reference>
<reference key="6">
    <citation type="journal article" date="2003" name="Plant Cell">
        <title>BRITTLE CULM1, which encodes a COBRA-like protein, affects the mechanical properties of rice plants.</title>
        <authorList>
            <person name="Li Y."/>
            <person name="Qian Q."/>
            <person name="Zhou Y."/>
            <person name="Yan M."/>
            <person name="Sun L."/>
            <person name="Zhang M."/>
            <person name="Fu Z."/>
            <person name="Wang Y."/>
            <person name="Han B."/>
            <person name="Pang X."/>
            <person name="Chen M."/>
            <person name="Li J."/>
        </authorList>
    </citation>
    <scope>IDENTIFICATION</scope>
    <scope>NOMENCLATURE</scope>
</reference>
<proteinExistence type="evidence at transcript level"/>
<organism>
    <name type="scientific">Oryza sativa subsp. japonica</name>
    <name type="common">Rice</name>
    <dbReference type="NCBI Taxonomy" id="39947"/>
    <lineage>
        <taxon>Eukaryota</taxon>
        <taxon>Viridiplantae</taxon>
        <taxon>Streptophyta</taxon>
        <taxon>Embryophyta</taxon>
        <taxon>Tracheophyta</taxon>
        <taxon>Spermatophyta</taxon>
        <taxon>Magnoliopsida</taxon>
        <taxon>Liliopsida</taxon>
        <taxon>Poales</taxon>
        <taxon>Poaceae</taxon>
        <taxon>BOP clade</taxon>
        <taxon>Oryzoideae</taxon>
        <taxon>Oryzeae</taxon>
        <taxon>Oryzinae</taxon>
        <taxon>Oryza</taxon>
        <taxon>Oryza sativa</taxon>
    </lineage>
</organism>
<keyword id="KW-1003">Cell membrane</keyword>
<keyword id="KW-0325">Glycoprotein</keyword>
<keyword id="KW-0336">GPI-anchor</keyword>
<keyword id="KW-0449">Lipoprotein</keyword>
<keyword id="KW-0472">Membrane</keyword>
<keyword id="KW-1185">Reference proteome</keyword>
<keyword id="KW-0732">Signal</keyword>
<dbReference type="EMBL" id="AP005175">
    <property type="protein sequence ID" value="BAC83872.1"/>
    <property type="molecule type" value="Genomic_DNA"/>
</dbReference>
<dbReference type="EMBL" id="AP008213">
    <property type="protein sequence ID" value="BAF22133.2"/>
    <property type="molecule type" value="Genomic_DNA"/>
</dbReference>
<dbReference type="EMBL" id="AP014963">
    <property type="protein sequence ID" value="BAT02549.1"/>
    <property type="molecule type" value="Genomic_DNA"/>
</dbReference>
<dbReference type="EMBL" id="CM000144">
    <property type="protein sequence ID" value="EAZ40580.1"/>
    <property type="molecule type" value="Genomic_DNA"/>
</dbReference>
<dbReference type="EMBL" id="AK101860">
    <property type="protein sequence ID" value="BAG95261.1"/>
    <property type="molecule type" value="mRNA"/>
</dbReference>
<dbReference type="EMBL" id="AK121884">
    <property type="protein sequence ID" value="BAH00705.1"/>
    <property type="molecule type" value="mRNA"/>
</dbReference>
<dbReference type="RefSeq" id="XP_015646930.1">
    <property type="nucleotide sequence ID" value="XM_015791444.1"/>
</dbReference>
<dbReference type="FunCoup" id="Q6Z4G8">
    <property type="interactions" value="89"/>
</dbReference>
<dbReference type="STRING" id="39947.Q6Z4G8"/>
<dbReference type="GlyCosmos" id="Q6Z4G8">
    <property type="glycosylation" value="9 sites, No reported glycans"/>
</dbReference>
<dbReference type="PaxDb" id="39947-Q6Z4G8"/>
<dbReference type="EnsemblPlants" id="Os07t0604300-01">
    <property type="protein sequence ID" value="Os07t0604300-01"/>
    <property type="gene ID" value="Os07g0604300"/>
</dbReference>
<dbReference type="Gramene" id="Os07t0604300-01">
    <property type="protein sequence ID" value="Os07t0604300-01"/>
    <property type="gene ID" value="Os07g0604300"/>
</dbReference>
<dbReference type="KEGG" id="dosa:Os07g0604300"/>
<dbReference type="eggNOG" id="ENOG502QTGW">
    <property type="taxonomic scope" value="Eukaryota"/>
</dbReference>
<dbReference type="HOGENOM" id="CLU_038120_0_0_1"/>
<dbReference type="InParanoid" id="Q6Z4G8"/>
<dbReference type="OMA" id="IIWAMNG"/>
<dbReference type="OrthoDB" id="2012261at2759"/>
<dbReference type="Proteomes" id="UP000000763">
    <property type="component" value="Chromosome 7"/>
</dbReference>
<dbReference type="Proteomes" id="UP000007752">
    <property type="component" value="Chromosome 7"/>
</dbReference>
<dbReference type="Proteomes" id="UP000059680">
    <property type="component" value="Chromosome 7"/>
</dbReference>
<dbReference type="GO" id="GO:0005886">
    <property type="term" value="C:plasma membrane"/>
    <property type="evidence" value="ECO:0000318"/>
    <property type="project" value="GO_Central"/>
</dbReference>
<dbReference type="GO" id="GO:0098552">
    <property type="term" value="C:side of membrane"/>
    <property type="evidence" value="ECO:0007669"/>
    <property type="project" value="UniProtKB-KW"/>
</dbReference>
<dbReference type="GO" id="GO:0010215">
    <property type="term" value="P:cellulose microfibril organization"/>
    <property type="evidence" value="ECO:0007669"/>
    <property type="project" value="InterPro"/>
</dbReference>
<dbReference type="GO" id="GO:0052324">
    <property type="term" value="P:plant-type cell wall cellulose biosynthetic process"/>
    <property type="evidence" value="ECO:0000318"/>
    <property type="project" value="GO_Central"/>
</dbReference>
<dbReference type="InterPro" id="IPR056900">
    <property type="entry name" value="COB_C"/>
</dbReference>
<dbReference type="InterPro" id="IPR006918">
    <property type="entry name" value="COBRA_pln"/>
</dbReference>
<dbReference type="PANTHER" id="PTHR31673:SF63">
    <property type="entry name" value="COBRA-LIKE PROTEIN 1"/>
    <property type="match status" value="1"/>
</dbReference>
<dbReference type="PANTHER" id="PTHR31673">
    <property type="entry name" value="PROTEIN COBRA"/>
    <property type="match status" value="1"/>
</dbReference>
<dbReference type="Pfam" id="PF25079">
    <property type="entry name" value="COB_C"/>
    <property type="match status" value="1"/>
</dbReference>
<dbReference type="Pfam" id="PF04833">
    <property type="entry name" value="COBRA"/>
    <property type="match status" value="1"/>
</dbReference>
<dbReference type="PIRSF" id="PIRSF038122">
    <property type="entry name" value="COBRA"/>
    <property type="match status" value="1"/>
</dbReference>